<name>TMCAL_ACET2</name>
<accession>A3DF04</accession>
<comment type="function">
    <text evidence="1">Catalyzes the formation of N(4)-acetylcytidine (ac(4)C) at the wobble position of elongator tRNA(Met), using acetate and ATP as substrates. First activates an acetate ion to form acetyladenylate (Ac-AMP) and then transfers the acetyl group to tRNA to form ac(4)C34.</text>
</comment>
<comment type="catalytic activity">
    <reaction evidence="1">
        <text>cytidine(34) in elongator tRNA(Met) + acetate + ATP = N(4)-acetylcytidine(34) in elongator tRNA(Met) + AMP + diphosphate</text>
        <dbReference type="Rhea" id="RHEA:58144"/>
        <dbReference type="Rhea" id="RHEA-COMP:10693"/>
        <dbReference type="Rhea" id="RHEA-COMP:10694"/>
        <dbReference type="ChEBI" id="CHEBI:30089"/>
        <dbReference type="ChEBI" id="CHEBI:30616"/>
        <dbReference type="ChEBI" id="CHEBI:33019"/>
        <dbReference type="ChEBI" id="CHEBI:74900"/>
        <dbReference type="ChEBI" id="CHEBI:82748"/>
        <dbReference type="ChEBI" id="CHEBI:456215"/>
    </reaction>
</comment>
<comment type="subcellular location">
    <subcellularLocation>
        <location evidence="1">Cytoplasm</location>
    </subcellularLocation>
</comment>
<comment type="similarity">
    <text evidence="1">Belongs to the TmcAL family.</text>
</comment>
<keyword id="KW-0067">ATP-binding</keyword>
<keyword id="KW-0963">Cytoplasm</keyword>
<keyword id="KW-0436">Ligase</keyword>
<keyword id="KW-0547">Nucleotide-binding</keyword>
<keyword id="KW-1185">Reference proteome</keyword>
<keyword id="KW-0694">RNA-binding</keyword>
<keyword id="KW-0819">tRNA processing</keyword>
<keyword id="KW-0820">tRNA-binding</keyword>
<gene>
    <name evidence="1" type="primary">tmcAL</name>
    <name type="ordered locus">Cthe_1301</name>
</gene>
<evidence type="ECO:0000255" key="1">
    <source>
        <dbReference type="HAMAP-Rule" id="MF_01539"/>
    </source>
</evidence>
<protein>
    <recommendedName>
        <fullName evidence="1">tRNA(Met) cytidine acetate ligase</fullName>
        <ecNumber evidence="1">6.3.4.-</ecNumber>
    </recommendedName>
</protein>
<organism>
    <name type="scientific">Acetivibrio thermocellus (strain ATCC 27405 / DSM 1237 / JCM 9322 / NBRC 103400 / NCIMB 10682 / NRRL B-4536 / VPI 7372)</name>
    <name type="common">Clostridium thermocellum</name>
    <dbReference type="NCBI Taxonomy" id="203119"/>
    <lineage>
        <taxon>Bacteria</taxon>
        <taxon>Bacillati</taxon>
        <taxon>Bacillota</taxon>
        <taxon>Clostridia</taxon>
        <taxon>Eubacteriales</taxon>
        <taxon>Oscillospiraceae</taxon>
        <taxon>Acetivibrio</taxon>
    </lineage>
</organism>
<dbReference type="EC" id="6.3.4.-" evidence="1"/>
<dbReference type="EMBL" id="CP000568">
    <property type="protein sequence ID" value="ABN52533.1"/>
    <property type="molecule type" value="Genomic_DNA"/>
</dbReference>
<dbReference type="RefSeq" id="WP_004463686.1">
    <property type="nucleotide sequence ID" value="NC_009012.1"/>
</dbReference>
<dbReference type="SMR" id="A3DF04"/>
<dbReference type="STRING" id="203119.Cthe_1301"/>
<dbReference type="GeneID" id="35805188"/>
<dbReference type="KEGG" id="cth:Cthe_1301"/>
<dbReference type="eggNOG" id="COG1323">
    <property type="taxonomic scope" value="Bacteria"/>
</dbReference>
<dbReference type="HOGENOM" id="CLU_038915_0_1_9"/>
<dbReference type="OrthoDB" id="9769796at2"/>
<dbReference type="Proteomes" id="UP000002145">
    <property type="component" value="Chromosome"/>
</dbReference>
<dbReference type="GO" id="GO:0005737">
    <property type="term" value="C:cytoplasm"/>
    <property type="evidence" value="ECO:0007669"/>
    <property type="project" value="UniProtKB-SubCell"/>
</dbReference>
<dbReference type="GO" id="GO:0005524">
    <property type="term" value="F:ATP binding"/>
    <property type="evidence" value="ECO:0007669"/>
    <property type="project" value="UniProtKB-KW"/>
</dbReference>
<dbReference type="GO" id="GO:0016879">
    <property type="term" value="F:ligase activity, forming carbon-nitrogen bonds"/>
    <property type="evidence" value="ECO:0007669"/>
    <property type="project" value="UniProtKB-UniRule"/>
</dbReference>
<dbReference type="GO" id="GO:0000049">
    <property type="term" value="F:tRNA binding"/>
    <property type="evidence" value="ECO:0007669"/>
    <property type="project" value="UniProtKB-KW"/>
</dbReference>
<dbReference type="GO" id="GO:0006400">
    <property type="term" value="P:tRNA modification"/>
    <property type="evidence" value="ECO:0007669"/>
    <property type="project" value="UniProtKB-UniRule"/>
</dbReference>
<dbReference type="Gene3D" id="3.40.50.620">
    <property type="entry name" value="HUPs"/>
    <property type="match status" value="1"/>
</dbReference>
<dbReference type="HAMAP" id="MF_01539">
    <property type="entry name" value="TmcAL"/>
    <property type="match status" value="1"/>
</dbReference>
<dbReference type="InterPro" id="IPR014729">
    <property type="entry name" value="Rossmann-like_a/b/a_fold"/>
</dbReference>
<dbReference type="InterPro" id="IPR008513">
    <property type="entry name" value="tRNA(Met)_cyd_acetate_ligase"/>
</dbReference>
<dbReference type="NCBIfam" id="NF010191">
    <property type="entry name" value="PRK13670.1"/>
    <property type="match status" value="1"/>
</dbReference>
<dbReference type="PANTHER" id="PTHR37825">
    <property type="entry name" value="TRNA(MET) CYTIDINE ACETATE LIGASE"/>
    <property type="match status" value="1"/>
</dbReference>
<dbReference type="PANTHER" id="PTHR37825:SF1">
    <property type="entry name" value="TRNA(MET) CYTIDINE ACETATE LIGASE"/>
    <property type="match status" value="1"/>
</dbReference>
<dbReference type="Pfam" id="PF05636">
    <property type="entry name" value="HIGH_NTase1"/>
    <property type="match status" value="1"/>
</dbReference>
<dbReference type="SUPFAM" id="SSF52374">
    <property type="entry name" value="Nucleotidylyl transferase"/>
    <property type="match status" value="1"/>
</dbReference>
<reference key="1">
    <citation type="submission" date="2007-02" db="EMBL/GenBank/DDBJ databases">
        <title>Complete sequence of Clostridium thermocellum ATCC 27405.</title>
        <authorList>
            <consortium name="US DOE Joint Genome Institute"/>
            <person name="Copeland A."/>
            <person name="Lucas S."/>
            <person name="Lapidus A."/>
            <person name="Barry K."/>
            <person name="Detter J.C."/>
            <person name="Glavina del Rio T."/>
            <person name="Hammon N."/>
            <person name="Israni S."/>
            <person name="Dalin E."/>
            <person name="Tice H."/>
            <person name="Pitluck S."/>
            <person name="Chertkov O."/>
            <person name="Brettin T."/>
            <person name="Bruce D."/>
            <person name="Han C."/>
            <person name="Tapia R."/>
            <person name="Gilna P."/>
            <person name="Schmutz J."/>
            <person name="Larimer F."/>
            <person name="Land M."/>
            <person name="Hauser L."/>
            <person name="Kyrpides N."/>
            <person name="Mikhailova N."/>
            <person name="Wu J.H.D."/>
            <person name="Newcomb M."/>
            <person name="Richardson P."/>
        </authorList>
    </citation>
    <scope>NUCLEOTIDE SEQUENCE [LARGE SCALE GENOMIC DNA]</scope>
    <source>
        <strain>ATCC 27405 / DSM 1237 / JCM 9322 / NBRC 103400 / NCIMB 10682 / NRRL B-4536 / VPI 7372</strain>
    </source>
</reference>
<proteinExistence type="inferred from homology"/>
<sequence length="415" mass="46456">MKVLGLIVEYNPFHNGHLYHLEESKKISGADFVVCVMSGNFIQRGEPAIVNKWARTKMALSAGADLVIELPLSCAMASAEYFASGAVRILNDIGIVDYICFGSEHGDVKTLDYIAQILVEEPESYKSFLKEELDNGLSYPAARESALKKYTAHSINIPQIISSSNNILGIEYLKALRRIKSSIIPLTIKRINNDYNTENITGSISSASSIRKYISTSNSTSFDDVLAMTMPKTSVDILFEEFSAGRGPVFKEDFYPVVTSLIRKMTPEQIRNFAYVSEGLENRIKSAADTAGTYEELVESICTRRYTKTRVQRILMGILMGVTSKDLDMLSRFDSPQYARILGFNSKGKQLLSQIKKKSSIPLVLKLSDFIKSCDPVLKRKLELEILATDLYVMCYKNPAFRKAGQEFTQNIIIM</sequence>
<feature type="chain" id="PRO_0000300170" description="tRNA(Met) cytidine acetate ligase">
    <location>
        <begin position="1"/>
        <end position="415"/>
    </location>
</feature>
<feature type="binding site" evidence="1">
    <location>
        <begin position="7"/>
        <end position="20"/>
    </location>
    <ligand>
        <name>ATP</name>
        <dbReference type="ChEBI" id="CHEBI:30616"/>
    </ligand>
</feature>
<feature type="binding site" evidence="1">
    <location>
        <position position="102"/>
    </location>
    <ligand>
        <name>ATP</name>
        <dbReference type="ChEBI" id="CHEBI:30616"/>
    </ligand>
</feature>
<feature type="binding site" evidence="1">
    <location>
        <position position="165"/>
    </location>
    <ligand>
        <name>ATP</name>
        <dbReference type="ChEBI" id="CHEBI:30616"/>
    </ligand>
</feature>
<feature type="binding site" evidence="1">
    <location>
        <begin position="190"/>
        <end position="191"/>
    </location>
    <ligand>
        <name>ATP</name>
        <dbReference type="ChEBI" id="CHEBI:30616"/>
    </ligand>
</feature>